<comment type="function">
    <text evidence="1">DNA-dependent RNA polymerase catalyzes the transcription of DNA into RNA using the four ribonucleoside triphosphates as substrates.</text>
</comment>
<comment type="catalytic activity">
    <reaction evidence="1">
        <text>RNA(n) + a ribonucleoside 5'-triphosphate = RNA(n+1) + diphosphate</text>
        <dbReference type="Rhea" id="RHEA:21248"/>
        <dbReference type="Rhea" id="RHEA-COMP:14527"/>
        <dbReference type="Rhea" id="RHEA-COMP:17342"/>
        <dbReference type="ChEBI" id="CHEBI:33019"/>
        <dbReference type="ChEBI" id="CHEBI:61557"/>
        <dbReference type="ChEBI" id="CHEBI:140395"/>
        <dbReference type="EC" id="2.7.7.6"/>
    </reaction>
</comment>
<comment type="cofactor">
    <cofactor evidence="1">
        <name>Mg(2+)</name>
        <dbReference type="ChEBI" id="CHEBI:18420"/>
    </cofactor>
    <text evidence="1">Binds 1 Mg(2+) ion per subunit.</text>
</comment>
<comment type="cofactor">
    <cofactor evidence="1">
        <name>Zn(2+)</name>
        <dbReference type="ChEBI" id="CHEBI:29105"/>
    </cofactor>
    <text evidence="1">Binds 2 Zn(2+) ions per subunit.</text>
</comment>
<comment type="subunit">
    <text evidence="1">The RNAP catalytic core consists of 2 alpha, 1 beta, 1 beta' and 1 omega subunit. When a sigma factor is associated with the core the holoenzyme is formed, which can initiate transcription.</text>
</comment>
<comment type="similarity">
    <text evidence="1">Belongs to the RNA polymerase beta' chain family.</text>
</comment>
<sequence length="1400" mass="155601">MNQEVMNLFNPQAPAQTFDSIRISIASPEKILSWSYGEIKKPETINYRTFKPERDGLFCARIFGPIKDYECLCGKYKRMKYKGIICEKCGVEVTLSRVRRERMGHIELAAPVAHIWFLKSLPSRIGTLLDMTLKDIERVLYFENYIVTEPGLTSLKEHQLLSEEEYMIAVDEFGEDQFTALIGAEAIYELLASMELEKIAADLRVDLAETTSDLKQKKLMKRLKIVENFLESGNRPEWMIMKIVPVIPPDLRPLVPLDGGRFATSDLNDLYRRVINRNNRLKRLIELRAPGIIIRNEKRMLQEAVDALFDNGRRGRVITGANKRPLKSLSDMLKGKQGRFRQNLLGKRVDYSGRSVIVTGPELKLHQCGLPKKMALELFKPFIYARLDAKGYSSTVKQAKKLVEKERPEVWDILDEVIREHPVLLNRAPTLHRLGIQAFEPTLIEGKAIQLHPLVCTAFNADFDGDQMAVHVPLSLEAQLEARVLMMSTNNILHPANGAPIIVPSQDMVLGLYYLSIVAEKEPGEGMIFADMGELQHALENKVVTLHTKIKGRFKTVDAEGNPVSKIYDTTPGRMIMGELLPKNVNVPFDICNQEMTKKNISKMIDHVYRHCGQKETVIFCDRIMQLGFAHACRAGISFGKDDMVIPESKAKIVAETEALTTEYEQQYNDGLITQGEKYNKVVDAWGKATDKITEEMMARLKAVEFDPVTGRQKQMNSVYMMSHSGARGSVNQMRQLGGMRGLMAKPSGEIIETPIISNFKEGLTVNEYFNSTHGARKGLADTALKTANSGYLTRRLVDVAQDAIISEVDCGAEIGLTMQPIVDAGQIVASIGQRVLGRTALDPILHPVTGEVIVEAGRMIEEKDVEIIEKAGIQSIRIRSALTCETRDGVCAKCYGRDLARGTPVNQGEAVGVIAAQSIGEPGTQLTMRTFHLGGTAQVVDSSYLEASYEGTVKLRNRNVVRNSDGNLVVMGRNMAVLILDATGKERAVHRVTYGSRLFVDEGDTVKRGQRIAEWDPYTRPIMTEVEGYVEFEDLVDGLSVSETADESTGITKRVVIDWRSTPRGSDLKPAMVIKDKAGKILKLSKGGDARFLLSVESILSVEPGAHVKAGDVIARLPMESAKTKDITGGLPRVAELFEARRPKDHAIIAEIDGTVRFGRDYKNKRRIIIEPNDDTIEPVEYLIPKGKPFHLQDGDVIEKGEYILDGNPAPHDILAIKGVEALASYLVNEIQEVYRLQGVLINDKHIEVIVRQMLQKVEITESGDTGYIPGDHVDRIELEEINERLIEEGKKPGSGNPVLLGITKASLQTPSFISAASFQETTRVLTEAAVAGKMDTLQGLKENVIVGRLIPAGTGGMTNQIRRIATARDELIIDERRKTSGSAEANAMLVDMTNNAAE</sequence>
<dbReference type="EC" id="2.7.7.6" evidence="1"/>
<dbReference type="EMBL" id="AE014291">
    <property type="protein sequence ID" value="AAN30161.1"/>
    <property type="molecule type" value="Genomic_DNA"/>
</dbReference>
<dbReference type="EMBL" id="CP002997">
    <property type="protein sequence ID" value="AEM18579.1"/>
    <property type="molecule type" value="Genomic_DNA"/>
</dbReference>
<dbReference type="RefSeq" id="WP_004690918.1">
    <property type="nucleotide sequence ID" value="NZ_KN046804.1"/>
</dbReference>
<dbReference type="SMR" id="Q8G070"/>
<dbReference type="GeneID" id="45052275"/>
<dbReference type="KEGG" id="bms:BR1242"/>
<dbReference type="KEGG" id="bsi:BS1330_I1238"/>
<dbReference type="PATRIC" id="fig|204722.22.peg.605"/>
<dbReference type="HOGENOM" id="CLU_000524_3_1_5"/>
<dbReference type="PhylomeDB" id="Q8G070"/>
<dbReference type="Proteomes" id="UP000007104">
    <property type="component" value="Chromosome I"/>
</dbReference>
<dbReference type="GO" id="GO:0000428">
    <property type="term" value="C:DNA-directed RNA polymerase complex"/>
    <property type="evidence" value="ECO:0007669"/>
    <property type="project" value="UniProtKB-KW"/>
</dbReference>
<dbReference type="GO" id="GO:0003677">
    <property type="term" value="F:DNA binding"/>
    <property type="evidence" value="ECO:0007669"/>
    <property type="project" value="UniProtKB-UniRule"/>
</dbReference>
<dbReference type="GO" id="GO:0003899">
    <property type="term" value="F:DNA-directed RNA polymerase activity"/>
    <property type="evidence" value="ECO:0007669"/>
    <property type="project" value="UniProtKB-UniRule"/>
</dbReference>
<dbReference type="GO" id="GO:0000287">
    <property type="term" value="F:magnesium ion binding"/>
    <property type="evidence" value="ECO:0007669"/>
    <property type="project" value="UniProtKB-UniRule"/>
</dbReference>
<dbReference type="GO" id="GO:0008270">
    <property type="term" value="F:zinc ion binding"/>
    <property type="evidence" value="ECO:0007669"/>
    <property type="project" value="UniProtKB-UniRule"/>
</dbReference>
<dbReference type="GO" id="GO:0006351">
    <property type="term" value="P:DNA-templated transcription"/>
    <property type="evidence" value="ECO:0007669"/>
    <property type="project" value="UniProtKB-UniRule"/>
</dbReference>
<dbReference type="CDD" id="cd02655">
    <property type="entry name" value="RNAP_beta'_C"/>
    <property type="match status" value="1"/>
</dbReference>
<dbReference type="CDD" id="cd01609">
    <property type="entry name" value="RNAP_beta'_N"/>
    <property type="match status" value="1"/>
</dbReference>
<dbReference type="FunFam" id="4.10.860.120:FF:000001">
    <property type="entry name" value="DNA-directed RNA polymerase subunit beta"/>
    <property type="match status" value="1"/>
</dbReference>
<dbReference type="Gene3D" id="1.10.132.30">
    <property type="match status" value="1"/>
</dbReference>
<dbReference type="Gene3D" id="1.10.150.390">
    <property type="match status" value="1"/>
</dbReference>
<dbReference type="Gene3D" id="1.10.1790.20">
    <property type="match status" value="1"/>
</dbReference>
<dbReference type="Gene3D" id="1.10.40.90">
    <property type="match status" value="1"/>
</dbReference>
<dbReference type="Gene3D" id="2.40.40.20">
    <property type="match status" value="1"/>
</dbReference>
<dbReference type="Gene3D" id="2.40.50.100">
    <property type="match status" value="3"/>
</dbReference>
<dbReference type="Gene3D" id="4.10.860.120">
    <property type="entry name" value="RNA polymerase II, clamp domain"/>
    <property type="match status" value="1"/>
</dbReference>
<dbReference type="Gene3D" id="1.10.274.100">
    <property type="entry name" value="RNA polymerase Rpb1, domain 3"/>
    <property type="match status" value="1"/>
</dbReference>
<dbReference type="HAMAP" id="MF_01322">
    <property type="entry name" value="RNApol_bact_RpoC"/>
    <property type="match status" value="1"/>
</dbReference>
<dbReference type="InterPro" id="IPR045867">
    <property type="entry name" value="DNA-dir_RpoC_beta_prime"/>
</dbReference>
<dbReference type="InterPro" id="IPR012754">
    <property type="entry name" value="DNA-dir_RpoC_beta_prime_bact"/>
</dbReference>
<dbReference type="InterPro" id="IPR000722">
    <property type="entry name" value="RNA_pol_asu"/>
</dbReference>
<dbReference type="InterPro" id="IPR006592">
    <property type="entry name" value="RNA_pol_N"/>
</dbReference>
<dbReference type="InterPro" id="IPR007080">
    <property type="entry name" value="RNA_pol_Rpb1_1"/>
</dbReference>
<dbReference type="InterPro" id="IPR007066">
    <property type="entry name" value="RNA_pol_Rpb1_3"/>
</dbReference>
<dbReference type="InterPro" id="IPR042102">
    <property type="entry name" value="RNA_pol_Rpb1_3_sf"/>
</dbReference>
<dbReference type="InterPro" id="IPR007083">
    <property type="entry name" value="RNA_pol_Rpb1_4"/>
</dbReference>
<dbReference type="InterPro" id="IPR007081">
    <property type="entry name" value="RNA_pol_Rpb1_5"/>
</dbReference>
<dbReference type="InterPro" id="IPR044893">
    <property type="entry name" value="RNA_pol_Rpb1_clamp_domain"/>
</dbReference>
<dbReference type="InterPro" id="IPR038120">
    <property type="entry name" value="Rpb1_funnel_sf"/>
</dbReference>
<dbReference type="NCBIfam" id="TIGR02386">
    <property type="entry name" value="rpoC_TIGR"/>
    <property type="match status" value="1"/>
</dbReference>
<dbReference type="PANTHER" id="PTHR19376">
    <property type="entry name" value="DNA-DIRECTED RNA POLYMERASE"/>
    <property type="match status" value="1"/>
</dbReference>
<dbReference type="PANTHER" id="PTHR19376:SF54">
    <property type="entry name" value="DNA-DIRECTED RNA POLYMERASE SUBUNIT BETA"/>
    <property type="match status" value="1"/>
</dbReference>
<dbReference type="Pfam" id="PF04997">
    <property type="entry name" value="RNA_pol_Rpb1_1"/>
    <property type="match status" value="1"/>
</dbReference>
<dbReference type="Pfam" id="PF00623">
    <property type="entry name" value="RNA_pol_Rpb1_2"/>
    <property type="match status" value="1"/>
</dbReference>
<dbReference type="Pfam" id="PF04983">
    <property type="entry name" value="RNA_pol_Rpb1_3"/>
    <property type="match status" value="1"/>
</dbReference>
<dbReference type="Pfam" id="PF05000">
    <property type="entry name" value="RNA_pol_Rpb1_4"/>
    <property type="match status" value="1"/>
</dbReference>
<dbReference type="Pfam" id="PF04998">
    <property type="entry name" value="RNA_pol_Rpb1_5"/>
    <property type="match status" value="1"/>
</dbReference>
<dbReference type="SMART" id="SM00663">
    <property type="entry name" value="RPOLA_N"/>
    <property type="match status" value="1"/>
</dbReference>
<dbReference type="SUPFAM" id="SSF64484">
    <property type="entry name" value="beta and beta-prime subunits of DNA dependent RNA-polymerase"/>
    <property type="match status" value="1"/>
</dbReference>
<accession>Q8G070</accession>
<accession>G0KAG3</accession>
<gene>
    <name evidence="1" type="primary">rpoC</name>
    <name type="ordered locus">BR1242</name>
    <name type="ordered locus">BS1330_I1238</name>
</gene>
<name>RPOC_BRUSU</name>
<organism>
    <name type="scientific">Brucella suis biovar 1 (strain 1330)</name>
    <dbReference type="NCBI Taxonomy" id="204722"/>
    <lineage>
        <taxon>Bacteria</taxon>
        <taxon>Pseudomonadati</taxon>
        <taxon>Pseudomonadota</taxon>
        <taxon>Alphaproteobacteria</taxon>
        <taxon>Hyphomicrobiales</taxon>
        <taxon>Brucellaceae</taxon>
        <taxon>Brucella/Ochrobactrum group</taxon>
        <taxon>Brucella</taxon>
    </lineage>
</organism>
<evidence type="ECO:0000255" key="1">
    <source>
        <dbReference type="HAMAP-Rule" id="MF_01322"/>
    </source>
</evidence>
<keyword id="KW-0240">DNA-directed RNA polymerase</keyword>
<keyword id="KW-0460">Magnesium</keyword>
<keyword id="KW-0479">Metal-binding</keyword>
<keyword id="KW-0548">Nucleotidyltransferase</keyword>
<keyword id="KW-0804">Transcription</keyword>
<keyword id="KW-0808">Transferase</keyword>
<keyword id="KW-0862">Zinc</keyword>
<proteinExistence type="inferred from homology"/>
<protein>
    <recommendedName>
        <fullName evidence="1">DNA-directed RNA polymerase subunit beta'</fullName>
        <shortName evidence="1">RNAP subunit beta'</shortName>
        <ecNumber evidence="1">2.7.7.6</ecNumber>
    </recommendedName>
    <alternativeName>
        <fullName evidence="1">RNA polymerase subunit beta'</fullName>
    </alternativeName>
    <alternativeName>
        <fullName evidence="1">Transcriptase subunit beta'</fullName>
    </alternativeName>
</protein>
<feature type="chain" id="PRO_0000067718" description="DNA-directed RNA polymerase subunit beta'">
    <location>
        <begin position="1"/>
        <end position="1400"/>
    </location>
</feature>
<feature type="binding site" evidence="1">
    <location>
        <position position="71"/>
    </location>
    <ligand>
        <name>Zn(2+)</name>
        <dbReference type="ChEBI" id="CHEBI:29105"/>
        <label>1</label>
    </ligand>
</feature>
<feature type="binding site" evidence="1">
    <location>
        <position position="73"/>
    </location>
    <ligand>
        <name>Zn(2+)</name>
        <dbReference type="ChEBI" id="CHEBI:29105"/>
        <label>1</label>
    </ligand>
</feature>
<feature type="binding site" evidence="1">
    <location>
        <position position="86"/>
    </location>
    <ligand>
        <name>Zn(2+)</name>
        <dbReference type="ChEBI" id="CHEBI:29105"/>
        <label>1</label>
    </ligand>
</feature>
<feature type="binding site" evidence="1">
    <location>
        <position position="89"/>
    </location>
    <ligand>
        <name>Zn(2+)</name>
        <dbReference type="ChEBI" id="CHEBI:29105"/>
        <label>1</label>
    </ligand>
</feature>
<feature type="binding site" evidence="1">
    <location>
        <position position="462"/>
    </location>
    <ligand>
        <name>Mg(2+)</name>
        <dbReference type="ChEBI" id="CHEBI:18420"/>
    </ligand>
</feature>
<feature type="binding site" evidence="1">
    <location>
        <position position="464"/>
    </location>
    <ligand>
        <name>Mg(2+)</name>
        <dbReference type="ChEBI" id="CHEBI:18420"/>
    </ligand>
</feature>
<feature type="binding site" evidence="1">
    <location>
        <position position="466"/>
    </location>
    <ligand>
        <name>Mg(2+)</name>
        <dbReference type="ChEBI" id="CHEBI:18420"/>
    </ligand>
</feature>
<feature type="binding site" evidence="1">
    <location>
        <position position="811"/>
    </location>
    <ligand>
        <name>Zn(2+)</name>
        <dbReference type="ChEBI" id="CHEBI:29105"/>
        <label>2</label>
    </ligand>
</feature>
<feature type="binding site" evidence="1">
    <location>
        <position position="885"/>
    </location>
    <ligand>
        <name>Zn(2+)</name>
        <dbReference type="ChEBI" id="CHEBI:29105"/>
        <label>2</label>
    </ligand>
</feature>
<feature type="binding site" evidence="1">
    <location>
        <position position="892"/>
    </location>
    <ligand>
        <name>Zn(2+)</name>
        <dbReference type="ChEBI" id="CHEBI:29105"/>
        <label>2</label>
    </ligand>
</feature>
<feature type="binding site" evidence="1">
    <location>
        <position position="895"/>
    </location>
    <ligand>
        <name>Zn(2+)</name>
        <dbReference type="ChEBI" id="CHEBI:29105"/>
        <label>2</label>
    </ligand>
</feature>
<reference key="1">
    <citation type="journal article" date="2002" name="Proc. Natl. Acad. Sci. U.S.A.">
        <title>The Brucella suis genome reveals fundamental similarities between animal and plant pathogens and symbionts.</title>
        <authorList>
            <person name="Paulsen I.T."/>
            <person name="Seshadri R."/>
            <person name="Nelson K.E."/>
            <person name="Eisen J.A."/>
            <person name="Heidelberg J.F."/>
            <person name="Read T.D."/>
            <person name="Dodson R.J."/>
            <person name="Umayam L.A."/>
            <person name="Brinkac L.M."/>
            <person name="Beanan M.J."/>
            <person name="Daugherty S.C."/>
            <person name="DeBoy R.T."/>
            <person name="Durkin A.S."/>
            <person name="Kolonay J.F."/>
            <person name="Madupu R."/>
            <person name="Nelson W.C."/>
            <person name="Ayodeji B."/>
            <person name="Kraul M."/>
            <person name="Shetty J."/>
            <person name="Malek J.A."/>
            <person name="Van Aken S.E."/>
            <person name="Riedmuller S."/>
            <person name="Tettelin H."/>
            <person name="Gill S.R."/>
            <person name="White O."/>
            <person name="Salzberg S.L."/>
            <person name="Hoover D.L."/>
            <person name="Lindler L.E."/>
            <person name="Halling S.M."/>
            <person name="Boyle S.M."/>
            <person name="Fraser C.M."/>
        </authorList>
    </citation>
    <scope>NUCLEOTIDE SEQUENCE [LARGE SCALE GENOMIC DNA]</scope>
    <source>
        <strain>1330</strain>
    </source>
</reference>
<reference key="2">
    <citation type="journal article" date="2011" name="J. Bacteriol.">
        <title>Revised genome sequence of Brucella suis 1330.</title>
        <authorList>
            <person name="Tae H."/>
            <person name="Shallom S."/>
            <person name="Settlage R."/>
            <person name="Preston D."/>
            <person name="Adams L.G."/>
            <person name="Garner H.R."/>
        </authorList>
    </citation>
    <scope>NUCLEOTIDE SEQUENCE [LARGE SCALE GENOMIC DNA]</scope>
    <source>
        <strain>1330</strain>
    </source>
</reference>